<name>NUSB_HYDCU</name>
<protein>
    <recommendedName>
        <fullName evidence="1">Transcription antitermination protein NusB</fullName>
    </recommendedName>
    <alternativeName>
        <fullName evidence="1">Antitermination factor NusB</fullName>
    </alternativeName>
</protein>
<organism>
    <name type="scientific">Hydrogenovibrio crunogenus (strain DSM 25203 / XCL-2)</name>
    <name type="common">Thiomicrospira crunogena</name>
    <dbReference type="NCBI Taxonomy" id="317025"/>
    <lineage>
        <taxon>Bacteria</taxon>
        <taxon>Pseudomonadati</taxon>
        <taxon>Pseudomonadota</taxon>
        <taxon>Gammaproteobacteria</taxon>
        <taxon>Thiotrichales</taxon>
        <taxon>Piscirickettsiaceae</taxon>
        <taxon>Hydrogenovibrio</taxon>
    </lineage>
</organism>
<comment type="function">
    <text evidence="1">Involved in transcription antitermination. Required for transcription of ribosomal RNA (rRNA) genes. Binds specifically to the boxA antiterminator sequence of the ribosomal RNA (rrn) operons.</text>
</comment>
<comment type="similarity">
    <text evidence="1">Belongs to the NusB family.</text>
</comment>
<reference key="1">
    <citation type="journal article" date="2006" name="PLoS Biol.">
        <title>The genome of deep-sea vent chemolithoautotroph Thiomicrospira crunogena XCL-2.</title>
        <authorList>
            <person name="Scott K.M."/>
            <person name="Sievert S.M."/>
            <person name="Abril F.N."/>
            <person name="Ball L.A."/>
            <person name="Barrett C.J."/>
            <person name="Blake R.A."/>
            <person name="Boller A.J."/>
            <person name="Chain P.S.G."/>
            <person name="Clark J.A."/>
            <person name="Davis C.R."/>
            <person name="Detter C."/>
            <person name="Do K.F."/>
            <person name="Dobrinski K.P."/>
            <person name="Faza B.I."/>
            <person name="Fitzpatrick K.A."/>
            <person name="Freyermuth S.K."/>
            <person name="Harmer T.L."/>
            <person name="Hauser L.J."/>
            <person name="Huegler M."/>
            <person name="Kerfeld C.A."/>
            <person name="Klotz M.G."/>
            <person name="Kong W.W."/>
            <person name="Land M."/>
            <person name="Lapidus A."/>
            <person name="Larimer F.W."/>
            <person name="Longo D.L."/>
            <person name="Lucas S."/>
            <person name="Malfatti S.A."/>
            <person name="Massey S.E."/>
            <person name="Martin D.D."/>
            <person name="McCuddin Z."/>
            <person name="Meyer F."/>
            <person name="Moore J.L."/>
            <person name="Ocampo L.H. Jr."/>
            <person name="Paul J.H."/>
            <person name="Paulsen I.T."/>
            <person name="Reep D.K."/>
            <person name="Ren Q."/>
            <person name="Ross R.L."/>
            <person name="Sato P.Y."/>
            <person name="Thomas P."/>
            <person name="Tinkham L.E."/>
            <person name="Zeruth G.T."/>
        </authorList>
    </citation>
    <scope>NUCLEOTIDE SEQUENCE [LARGE SCALE GENOMIC DNA]</scope>
    <source>
        <strain>DSM 25203 / XCL-2</strain>
    </source>
</reference>
<accession>Q31FT2</accession>
<evidence type="ECO:0000255" key="1">
    <source>
        <dbReference type="HAMAP-Rule" id="MF_00073"/>
    </source>
</evidence>
<evidence type="ECO:0000256" key="2">
    <source>
        <dbReference type="SAM" id="MobiDB-lite"/>
    </source>
</evidence>
<feature type="chain" id="PRO_0000265620" description="Transcription antitermination protein NusB">
    <location>
        <begin position="1"/>
        <end position="161"/>
    </location>
</feature>
<feature type="region of interest" description="Disordered" evidence="2">
    <location>
        <begin position="1"/>
        <end position="22"/>
    </location>
</feature>
<sequence>MNLSDFKPGEGTEVPEEEKSVSVRTQTRRVALQALYQWQVNHSETVDIIKQFSEEGRLVDTDVALFQEIVNEVANHAADLDELYAPFLDRAVARIDPVEKNIMRMGVFELQNKLEIPYRVVINESVELAKRFGAEDSHKYINGILDKAAEGLRSLEKTQTD</sequence>
<dbReference type="EMBL" id="CP000109">
    <property type="protein sequence ID" value="ABB41991.1"/>
    <property type="molecule type" value="Genomic_DNA"/>
</dbReference>
<dbReference type="SMR" id="Q31FT2"/>
<dbReference type="STRING" id="317025.Tcr_1396"/>
<dbReference type="KEGG" id="tcx:Tcr_1396"/>
<dbReference type="eggNOG" id="COG0781">
    <property type="taxonomic scope" value="Bacteria"/>
</dbReference>
<dbReference type="HOGENOM" id="CLU_087843_4_1_6"/>
<dbReference type="OrthoDB" id="9789556at2"/>
<dbReference type="GO" id="GO:0005829">
    <property type="term" value="C:cytosol"/>
    <property type="evidence" value="ECO:0007669"/>
    <property type="project" value="TreeGrafter"/>
</dbReference>
<dbReference type="GO" id="GO:0003723">
    <property type="term" value="F:RNA binding"/>
    <property type="evidence" value="ECO:0007669"/>
    <property type="project" value="UniProtKB-UniRule"/>
</dbReference>
<dbReference type="GO" id="GO:0006353">
    <property type="term" value="P:DNA-templated transcription termination"/>
    <property type="evidence" value="ECO:0007669"/>
    <property type="project" value="UniProtKB-UniRule"/>
</dbReference>
<dbReference type="GO" id="GO:0031564">
    <property type="term" value="P:transcription antitermination"/>
    <property type="evidence" value="ECO:0007669"/>
    <property type="project" value="UniProtKB-KW"/>
</dbReference>
<dbReference type="Gene3D" id="1.10.940.10">
    <property type="entry name" value="NusB-like"/>
    <property type="match status" value="1"/>
</dbReference>
<dbReference type="HAMAP" id="MF_00073">
    <property type="entry name" value="NusB"/>
    <property type="match status" value="1"/>
</dbReference>
<dbReference type="InterPro" id="IPR035926">
    <property type="entry name" value="NusB-like_sf"/>
</dbReference>
<dbReference type="InterPro" id="IPR011605">
    <property type="entry name" value="NusB_fam"/>
</dbReference>
<dbReference type="InterPro" id="IPR006027">
    <property type="entry name" value="NusB_RsmB_TIM44"/>
</dbReference>
<dbReference type="NCBIfam" id="TIGR01951">
    <property type="entry name" value="nusB"/>
    <property type="match status" value="1"/>
</dbReference>
<dbReference type="PANTHER" id="PTHR11078:SF3">
    <property type="entry name" value="ANTITERMINATION NUSB DOMAIN-CONTAINING PROTEIN"/>
    <property type="match status" value="1"/>
</dbReference>
<dbReference type="PANTHER" id="PTHR11078">
    <property type="entry name" value="N UTILIZATION SUBSTANCE PROTEIN B-RELATED"/>
    <property type="match status" value="1"/>
</dbReference>
<dbReference type="Pfam" id="PF01029">
    <property type="entry name" value="NusB"/>
    <property type="match status" value="1"/>
</dbReference>
<dbReference type="SUPFAM" id="SSF48013">
    <property type="entry name" value="NusB-like"/>
    <property type="match status" value="1"/>
</dbReference>
<gene>
    <name evidence="1" type="primary">nusB</name>
    <name type="ordered locus">Tcr_1396</name>
</gene>
<proteinExistence type="inferred from homology"/>
<keyword id="KW-0694">RNA-binding</keyword>
<keyword id="KW-0804">Transcription</keyword>
<keyword id="KW-0889">Transcription antitermination</keyword>
<keyword id="KW-0805">Transcription regulation</keyword>